<sequence>MINHLALNTPYFGILLSVIPFFLATILFEKTNRFFLFAPLFVSMVFGVAFLYLTGIPYKTYKIGGDIIYFFLEPATICFAIPLYKKREVLVKHWHRIIGGIGIGTVVALLIILTFAKLAQFANDVILSMLPQAATTAIALPVSAGIGGIKELTSLAVILNGVIIYALGNKFLKLFRITNPIARGLALGTSGHTLGVAPAKELGPVEESMASIALVLVGVVVVAVVPVFVAIFF</sequence>
<name>LRGB_STAAB</name>
<organism>
    <name type="scientific">Staphylococcus aureus (strain bovine RF122 / ET3-1)</name>
    <dbReference type="NCBI Taxonomy" id="273036"/>
    <lineage>
        <taxon>Bacteria</taxon>
        <taxon>Bacillati</taxon>
        <taxon>Bacillota</taxon>
        <taxon>Bacilli</taxon>
        <taxon>Bacillales</taxon>
        <taxon>Staphylococcaceae</taxon>
        <taxon>Staphylococcus</taxon>
    </lineage>
</organism>
<gene>
    <name evidence="1" type="primary">lrgB</name>
    <name type="ordered locus">SAB0202</name>
</gene>
<feature type="chain" id="PRO_1000065444" description="Antiholin-like protein LrgB">
    <location>
        <begin position="1"/>
        <end position="233"/>
    </location>
</feature>
<feature type="transmembrane region" description="Helical" evidence="1">
    <location>
        <begin position="9"/>
        <end position="29"/>
    </location>
</feature>
<feature type="transmembrane region" description="Helical" evidence="1">
    <location>
        <begin position="34"/>
        <end position="54"/>
    </location>
</feature>
<feature type="transmembrane region" description="Helical" evidence="1">
    <location>
        <begin position="63"/>
        <end position="83"/>
    </location>
</feature>
<feature type="transmembrane region" description="Helical" evidence="1">
    <location>
        <begin position="97"/>
        <end position="117"/>
    </location>
</feature>
<feature type="transmembrane region" description="Helical" evidence="1">
    <location>
        <begin position="121"/>
        <end position="141"/>
    </location>
</feature>
<feature type="transmembrane region" description="Helical" evidence="1">
    <location>
        <begin position="144"/>
        <end position="164"/>
    </location>
</feature>
<feature type="transmembrane region" description="Helical" evidence="1">
    <location>
        <begin position="212"/>
        <end position="232"/>
    </location>
</feature>
<dbReference type="EMBL" id="AJ938182">
    <property type="protein sequence ID" value="CAI79890.1"/>
    <property type="molecule type" value="Genomic_DNA"/>
</dbReference>
<dbReference type="RefSeq" id="WP_000607067.1">
    <property type="nucleotide sequence ID" value="NC_007622.1"/>
</dbReference>
<dbReference type="KEGG" id="sab:SAB0202"/>
<dbReference type="HOGENOM" id="CLU_082099_1_0_9"/>
<dbReference type="GO" id="GO:0005886">
    <property type="term" value="C:plasma membrane"/>
    <property type="evidence" value="ECO:0007669"/>
    <property type="project" value="UniProtKB-SubCell"/>
</dbReference>
<dbReference type="GO" id="GO:0019835">
    <property type="term" value="P:cytolysis"/>
    <property type="evidence" value="ECO:0007669"/>
    <property type="project" value="UniProtKB-UniRule"/>
</dbReference>
<dbReference type="GO" id="GO:0031640">
    <property type="term" value="P:killing of cells of another organism"/>
    <property type="evidence" value="ECO:0007669"/>
    <property type="project" value="UniProtKB-KW"/>
</dbReference>
<dbReference type="GO" id="GO:0012501">
    <property type="term" value="P:programmed cell death"/>
    <property type="evidence" value="ECO:0007669"/>
    <property type="project" value="UniProtKB-UniRule"/>
</dbReference>
<dbReference type="HAMAP" id="MF_01142">
    <property type="entry name" value="LrgB"/>
    <property type="match status" value="1"/>
</dbReference>
<dbReference type="InterPro" id="IPR024891">
    <property type="entry name" value="Antiholin-like_LrgB"/>
</dbReference>
<dbReference type="InterPro" id="IPR007300">
    <property type="entry name" value="CidB/LrgB"/>
</dbReference>
<dbReference type="NCBIfam" id="NF003291">
    <property type="entry name" value="PRK04288.1"/>
    <property type="match status" value="1"/>
</dbReference>
<dbReference type="PANTHER" id="PTHR30249:SF0">
    <property type="entry name" value="PLASTIDAL GLYCOLATE_GLYCERATE TRANSLOCATOR 1, CHLOROPLASTIC"/>
    <property type="match status" value="1"/>
</dbReference>
<dbReference type="PANTHER" id="PTHR30249">
    <property type="entry name" value="PUTATIVE SEROTONIN TRANSPORTER"/>
    <property type="match status" value="1"/>
</dbReference>
<dbReference type="Pfam" id="PF04172">
    <property type="entry name" value="LrgB"/>
    <property type="match status" value="1"/>
</dbReference>
<accession>Q2YV65</accession>
<evidence type="ECO:0000255" key="1">
    <source>
        <dbReference type="HAMAP-Rule" id="MF_01142"/>
    </source>
</evidence>
<protein>
    <recommendedName>
        <fullName evidence="1">Antiholin-like protein LrgB</fullName>
    </recommendedName>
</protein>
<reference key="1">
    <citation type="journal article" date="2007" name="PLoS ONE">
        <title>Molecular correlates of host specialization in Staphylococcus aureus.</title>
        <authorList>
            <person name="Herron-Olson L."/>
            <person name="Fitzgerald J.R."/>
            <person name="Musser J.M."/>
            <person name="Kapur V."/>
        </authorList>
    </citation>
    <scope>NUCLEOTIDE SEQUENCE [LARGE SCALE GENOMIC DNA]</scope>
    <source>
        <strain>bovine RF122 / ET3-1</strain>
    </source>
</reference>
<proteinExistence type="inferred from homology"/>
<comment type="function">
    <text evidence="1">Inhibits the expression or activity of extracellular murein hydrolases by interacting, possibly with LrgA, with the holin-like proteins CidA and/or CidB. The LrgAB and CidAB proteins may affect the proton motive force of the membrane. May be involved in programmed cell death (PCD), possibly triggering PCD in response to antibiotics and environmental stresses.</text>
</comment>
<comment type="subcellular location">
    <subcellularLocation>
        <location evidence="1">Cell membrane</location>
        <topology evidence="1">Multi-pass membrane protein</topology>
    </subcellularLocation>
</comment>
<comment type="similarity">
    <text evidence="1">Belongs to the CidB/LrgB family. LrgB subfamily.</text>
</comment>
<keyword id="KW-1003">Cell membrane</keyword>
<keyword id="KW-0204">Cytolysis</keyword>
<keyword id="KW-0472">Membrane</keyword>
<keyword id="KW-0812">Transmembrane</keyword>
<keyword id="KW-1133">Transmembrane helix</keyword>